<protein>
    <recommendedName>
        <fullName evidence="1">Small ribosomal subunit protein eS17</fullName>
    </recommendedName>
    <alternativeName>
        <fullName evidence="2">30S ribosomal protein S17e</fullName>
    </alternativeName>
</protein>
<name>RS17E_NATPD</name>
<reference key="1">
    <citation type="journal article" date="2005" name="Genome Res.">
        <title>Living with two extremes: conclusions from the genome sequence of Natronomonas pharaonis.</title>
        <authorList>
            <person name="Falb M."/>
            <person name="Pfeiffer F."/>
            <person name="Palm P."/>
            <person name="Rodewald K."/>
            <person name="Hickmann V."/>
            <person name="Tittor J."/>
            <person name="Oesterhelt D."/>
        </authorList>
    </citation>
    <scope>NUCLEOTIDE SEQUENCE [LARGE SCALE GENOMIC DNA]</scope>
    <source>
        <strain>ATCC 35678 / DSM 2160 / CIP 103997 / JCM 8858 / NBRC 14720 / NCIMB 2260 / Gabara</strain>
    </source>
</reference>
<dbReference type="EMBL" id="CR936257">
    <property type="protein sequence ID" value="CAI49087.1"/>
    <property type="molecule type" value="Genomic_DNA"/>
</dbReference>
<dbReference type="RefSeq" id="WP_011322716.1">
    <property type="nucleotide sequence ID" value="NC_007426.1"/>
</dbReference>
<dbReference type="SMR" id="Q3IS04"/>
<dbReference type="STRING" id="348780.NP_1992A"/>
<dbReference type="EnsemblBacteria" id="CAI49087">
    <property type="protein sequence ID" value="CAI49087"/>
    <property type="gene ID" value="NP_1992A"/>
</dbReference>
<dbReference type="GeneID" id="3701326"/>
<dbReference type="KEGG" id="nph:NP_1992A"/>
<dbReference type="eggNOG" id="arCOG01885">
    <property type="taxonomic scope" value="Archaea"/>
</dbReference>
<dbReference type="HOGENOM" id="CLU_176720_1_0_2"/>
<dbReference type="OrthoDB" id="52479at2157"/>
<dbReference type="Proteomes" id="UP000002698">
    <property type="component" value="Chromosome"/>
</dbReference>
<dbReference type="GO" id="GO:0005829">
    <property type="term" value="C:cytosol"/>
    <property type="evidence" value="ECO:0007669"/>
    <property type="project" value="UniProtKB-ARBA"/>
</dbReference>
<dbReference type="GO" id="GO:1990904">
    <property type="term" value="C:ribonucleoprotein complex"/>
    <property type="evidence" value="ECO:0007669"/>
    <property type="project" value="UniProtKB-KW"/>
</dbReference>
<dbReference type="GO" id="GO:0005840">
    <property type="term" value="C:ribosome"/>
    <property type="evidence" value="ECO:0007669"/>
    <property type="project" value="UniProtKB-KW"/>
</dbReference>
<dbReference type="GO" id="GO:0003735">
    <property type="term" value="F:structural constituent of ribosome"/>
    <property type="evidence" value="ECO:0007669"/>
    <property type="project" value="InterPro"/>
</dbReference>
<dbReference type="GO" id="GO:0006412">
    <property type="term" value="P:translation"/>
    <property type="evidence" value="ECO:0007669"/>
    <property type="project" value="UniProtKB-UniRule"/>
</dbReference>
<dbReference type="Gene3D" id="1.10.60.20">
    <property type="entry name" value="Ribosomal protein S17e-like"/>
    <property type="match status" value="1"/>
</dbReference>
<dbReference type="HAMAP" id="MF_00511">
    <property type="entry name" value="Ribosomal_eS17"/>
    <property type="match status" value="1"/>
</dbReference>
<dbReference type="InterPro" id="IPR001210">
    <property type="entry name" value="Ribosomal_eS17"/>
</dbReference>
<dbReference type="InterPro" id="IPR018273">
    <property type="entry name" value="Ribosomal_eS17_CS"/>
</dbReference>
<dbReference type="InterPro" id="IPR036401">
    <property type="entry name" value="Ribosomal_eS17_sf"/>
</dbReference>
<dbReference type="NCBIfam" id="NF002242">
    <property type="entry name" value="PRK01151.1"/>
    <property type="match status" value="1"/>
</dbReference>
<dbReference type="PANTHER" id="PTHR10732">
    <property type="entry name" value="40S RIBOSOMAL PROTEIN S17"/>
    <property type="match status" value="1"/>
</dbReference>
<dbReference type="PANTHER" id="PTHR10732:SF0">
    <property type="entry name" value="40S RIBOSOMAL PROTEIN S17"/>
    <property type="match status" value="1"/>
</dbReference>
<dbReference type="Pfam" id="PF00833">
    <property type="entry name" value="Ribosomal_S17e"/>
    <property type="match status" value="1"/>
</dbReference>
<dbReference type="SUPFAM" id="SSF116820">
    <property type="entry name" value="Rps17e-like"/>
    <property type="match status" value="1"/>
</dbReference>
<dbReference type="PROSITE" id="PS00712">
    <property type="entry name" value="RIBOSOMAL_S17E"/>
    <property type="match status" value="1"/>
</dbReference>
<keyword id="KW-1185">Reference proteome</keyword>
<keyword id="KW-0687">Ribonucleoprotein</keyword>
<keyword id="KW-0689">Ribosomal protein</keyword>
<accession>Q3IS04</accession>
<comment type="similarity">
    <text evidence="1">Belongs to the eukaryotic ribosomal protein eS17 family.</text>
</comment>
<proteinExistence type="inferred from homology"/>
<sequence length="64" mass="7352">MAIKPAYVKKTGTLLMDRYPKAFGDDFEHNKELVDELTNIESKSVRNRIAGYVTRKQRSPQQPA</sequence>
<gene>
    <name evidence="1" type="primary">rps17e</name>
    <name type="ordered locus">NP_1992A</name>
</gene>
<evidence type="ECO:0000255" key="1">
    <source>
        <dbReference type="HAMAP-Rule" id="MF_00511"/>
    </source>
</evidence>
<evidence type="ECO:0000305" key="2"/>
<organism>
    <name type="scientific">Natronomonas pharaonis (strain ATCC 35678 / DSM 2160 / CIP 103997 / JCM 8858 / NBRC 14720 / NCIMB 2260 / Gabara)</name>
    <name type="common">Halobacterium pharaonis</name>
    <dbReference type="NCBI Taxonomy" id="348780"/>
    <lineage>
        <taxon>Archaea</taxon>
        <taxon>Methanobacteriati</taxon>
        <taxon>Methanobacteriota</taxon>
        <taxon>Stenosarchaea group</taxon>
        <taxon>Halobacteria</taxon>
        <taxon>Halobacteriales</taxon>
        <taxon>Haloarculaceae</taxon>
        <taxon>Natronomonas</taxon>
    </lineage>
</organism>
<feature type="chain" id="PRO_0000258604" description="Small ribosomal subunit protein eS17">
    <location>
        <begin position="1"/>
        <end position="64"/>
    </location>
</feature>